<accession>Q9RPQ3</accession>
<reference key="1">
    <citation type="journal article" date="2000" name="Curr. Microbiol.">
        <title>Organization and sequence of histidine biosynthesis genes hisH, -A, -F, and -IE in Thermoanaerobacter ethanolicus.</title>
        <authorList>
            <person name="Erbeznik M."/>
            <person name="Strobel H.J."/>
            <person name="Dawson K.A."/>
        </authorList>
    </citation>
    <scope>NUCLEOTIDE SEQUENCE [GENOMIC DNA]</scope>
</reference>
<protein>
    <recommendedName>
        <fullName>Histidine biosynthesis bifunctional protein HisIE</fullName>
    </recommendedName>
    <domain>
        <recommendedName>
            <fullName>Phosphoribosyl-AMP cyclohydrolase</fullName>
            <shortName>PRA-CH</shortName>
            <ecNumber>3.5.4.19</ecNumber>
        </recommendedName>
    </domain>
    <domain>
        <recommendedName>
            <fullName>Phosphoribosyl-ATP pyrophosphatase</fullName>
            <shortName>PRA-PH</shortName>
            <ecNumber>3.6.1.31</ecNumber>
        </recommendedName>
    </domain>
</protein>
<sequence>MENILKELKFDDRGLIPVITQDYKTNEVLMMAYIMKRPLKKSLETGKVHYFSRSRNKLWLKGETSGHFQLIKSISIDCDADTLLIKVEQVEAACHTGHYSCFYREISGNELKETSDKVFDEQKVYEAENAKILQEIYDVIVDRTIHPKEGSYTNYLFEKGLDKILKKVGEEAAEVIIGAKNRDKGEIVYEISDLIYHLLVLMVERGIKLEDIYEEA</sequence>
<dbReference type="EC" id="3.5.4.19"/>
<dbReference type="EC" id="3.6.1.31"/>
<dbReference type="EMBL" id="AF150930">
    <property type="protein sequence ID" value="AAF05095.1"/>
    <property type="molecule type" value="Genomic_DNA"/>
</dbReference>
<dbReference type="SMR" id="Q9RPQ3"/>
<dbReference type="UniPathway" id="UPA00031">
    <property type="reaction ID" value="UER00007"/>
</dbReference>
<dbReference type="UniPathway" id="UPA00031">
    <property type="reaction ID" value="UER00008"/>
</dbReference>
<dbReference type="GO" id="GO:0005737">
    <property type="term" value="C:cytoplasm"/>
    <property type="evidence" value="ECO:0007669"/>
    <property type="project" value="UniProtKB-SubCell"/>
</dbReference>
<dbReference type="GO" id="GO:0005524">
    <property type="term" value="F:ATP binding"/>
    <property type="evidence" value="ECO:0007669"/>
    <property type="project" value="UniProtKB-KW"/>
</dbReference>
<dbReference type="GO" id="GO:0004635">
    <property type="term" value="F:phosphoribosyl-AMP cyclohydrolase activity"/>
    <property type="evidence" value="ECO:0007669"/>
    <property type="project" value="UniProtKB-UniRule"/>
</dbReference>
<dbReference type="GO" id="GO:0004636">
    <property type="term" value="F:phosphoribosyl-ATP diphosphatase activity"/>
    <property type="evidence" value="ECO:0007669"/>
    <property type="project" value="UniProtKB-UniRule"/>
</dbReference>
<dbReference type="GO" id="GO:0000105">
    <property type="term" value="P:L-histidine biosynthetic process"/>
    <property type="evidence" value="ECO:0007669"/>
    <property type="project" value="UniProtKB-UniRule"/>
</dbReference>
<dbReference type="CDD" id="cd11534">
    <property type="entry name" value="NTP-PPase_HisIE_like"/>
    <property type="match status" value="1"/>
</dbReference>
<dbReference type="FunFam" id="3.10.20.810:FF:000001">
    <property type="entry name" value="Histidine biosynthesis bifunctional protein HisIE"/>
    <property type="match status" value="1"/>
</dbReference>
<dbReference type="Gene3D" id="4.10.80.70">
    <property type="match status" value="1"/>
</dbReference>
<dbReference type="Gene3D" id="1.10.287.1080">
    <property type="entry name" value="MazG-like"/>
    <property type="match status" value="1"/>
</dbReference>
<dbReference type="Gene3D" id="3.10.20.810">
    <property type="entry name" value="Phosphoribosyl-AMP cyclohydrolase"/>
    <property type="match status" value="1"/>
</dbReference>
<dbReference type="HAMAP" id="MF_01020">
    <property type="entry name" value="HisE"/>
    <property type="match status" value="1"/>
</dbReference>
<dbReference type="HAMAP" id="MF_01021">
    <property type="entry name" value="HisI"/>
    <property type="match status" value="1"/>
</dbReference>
<dbReference type="HAMAP" id="MF_01019">
    <property type="entry name" value="HisIE"/>
    <property type="match status" value="1"/>
</dbReference>
<dbReference type="InterPro" id="IPR023019">
    <property type="entry name" value="His_synth_HisIE"/>
</dbReference>
<dbReference type="InterPro" id="IPR008179">
    <property type="entry name" value="HisE"/>
</dbReference>
<dbReference type="InterPro" id="IPR026660">
    <property type="entry name" value="PRA-CH"/>
</dbReference>
<dbReference type="InterPro" id="IPR021130">
    <property type="entry name" value="PRib-ATP_PPHydrolase-like"/>
</dbReference>
<dbReference type="InterPro" id="IPR002496">
    <property type="entry name" value="PRib_AMP_CycHydrolase_dom"/>
</dbReference>
<dbReference type="InterPro" id="IPR038019">
    <property type="entry name" value="PRib_AMP_CycHydrolase_sf"/>
</dbReference>
<dbReference type="NCBIfam" id="TIGR03188">
    <property type="entry name" value="histidine_hisI"/>
    <property type="match status" value="1"/>
</dbReference>
<dbReference type="NCBIfam" id="NF000768">
    <property type="entry name" value="PRK00051.1"/>
    <property type="match status" value="1"/>
</dbReference>
<dbReference type="NCBIfam" id="NF002747">
    <property type="entry name" value="PRK02759.1"/>
    <property type="match status" value="1"/>
</dbReference>
<dbReference type="PANTHER" id="PTHR42945">
    <property type="entry name" value="HISTIDINE BIOSYNTHESIS BIFUNCTIONAL PROTEIN"/>
    <property type="match status" value="1"/>
</dbReference>
<dbReference type="PANTHER" id="PTHR42945:SF1">
    <property type="entry name" value="HISTIDINE BIOSYNTHESIS BIFUNCTIONAL PROTEIN HIS7"/>
    <property type="match status" value="1"/>
</dbReference>
<dbReference type="Pfam" id="PF01502">
    <property type="entry name" value="PRA-CH"/>
    <property type="match status" value="1"/>
</dbReference>
<dbReference type="Pfam" id="PF01503">
    <property type="entry name" value="PRA-PH"/>
    <property type="match status" value="1"/>
</dbReference>
<dbReference type="SUPFAM" id="SSF101386">
    <property type="entry name" value="all-alpha NTP pyrophosphatases"/>
    <property type="match status" value="1"/>
</dbReference>
<dbReference type="SUPFAM" id="SSF141734">
    <property type="entry name" value="HisI-like"/>
    <property type="match status" value="1"/>
</dbReference>
<proteinExistence type="inferred from homology"/>
<name>HIS2_THEP3</name>
<gene>
    <name type="primary">hisI</name>
    <name type="synonym">hisIE</name>
</gene>
<keyword id="KW-0028">Amino-acid biosynthesis</keyword>
<keyword id="KW-0067">ATP-binding</keyword>
<keyword id="KW-0963">Cytoplasm</keyword>
<keyword id="KW-0368">Histidine biosynthesis</keyword>
<keyword id="KW-0378">Hydrolase</keyword>
<keyword id="KW-0511">Multifunctional enzyme</keyword>
<keyword id="KW-0547">Nucleotide-binding</keyword>
<evidence type="ECO:0000250" key="1"/>
<evidence type="ECO:0000305" key="2"/>
<organism>
    <name type="scientific">Thermoanaerobacter pseudethanolicus (strain ATCC 33223 / 39E)</name>
    <name type="common">Clostridium thermohydrosulfuricum</name>
    <dbReference type="NCBI Taxonomy" id="340099"/>
    <lineage>
        <taxon>Bacteria</taxon>
        <taxon>Bacillati</taxon>
        <taxon>Bacillota</taxon>
        <taxon>Clostridia</taxon>
        <taxon>Thermoanaerobacterales</taxon>
        <taxon>Thermoanaerobacteraceae</taxon>
        <taxon>Thermoanaerobacter</taxon>
    </lineage>
</organism>
<comment type="catalytic activity">
    <reaction>
        <text>1-(5-phospho-beta-D-ribosyl)-ATP + H2O = 1-(5-phospho-beta-D-ribosyl)-5'-AMP + diphosphate + H(+)</text>
        <dbReference type="Rhea" id="RHEA:22828"/>
        <dbReference type="ChEBI" id="CHEBI:15377"/>
        <dbReference type="ChEBI" id="CHEBI:15378"/>
        <dbReference type="ChEBI" id="CHEBI:33019"/>
        <dbReference type="ChEBI" id="CHEBI:59457"/>
        <dbReference type="ChEBI" id="CHEBI:73183"/>
        <dbReference type="EC" id="3.6.1.31"/>
    </reaction>
</comment>
<comment type="catalytic activity">
    <reaction>
        <text>1-(5-phospho-beta-D-ribosyl)-5'-AMP + H2O = 1-(5-phospho-beta-D-ribosyl)-5-[(5-phospho-beta-D-ribosylamino)methylideneamino]imidazole-4-carboxamide</text>
        <dbReference type="Rhea" id="RHEA:20049"/>
        <dbReference type="ChEBI" id="CHEBI:15377"/>
        <dbReference type="ChEBI" id="CHEBI:58435"/>
        <dbReference type="ChEBI" id="CHEBI:59457"/>
        <dbReference type="EC" id="3.5.4.19"/>
    </reaction>
</comment>
<comment type="pathway">
    <text>Amino-acid biosynthesis; L-histidine biosynthesis; L-histidine from 5-phospho-alpha-D-ribose 1-diphosphate: step 2/9.</text>
</comment>
<comment type="pathway">
    <text>Amino-acid biosynthesis; L-histidine biosynthesis; L-histidine from 5-phospho-alpha-D-ribose 1-diphosphate: step 3/9.</text>
</comment>
<comment type="subcellular location">
    <subcellularLocation>
        <location evidence="1">Cytoplasm</location>
    </subcellularLocation>
</comment>
<comment type="similarity">
    <text evidence="2">In the N-terminal section; belongs to the PRA-CH family.</text>
</comment>
<comment type="similarity">
    <text evidence="2">In the C-terminal section; belongs to the PRA-PH family.</text>
</comment>
<feature type="chain" id="PRO_0000136441" description="Histidine biosynthesis bifunctional protein HisIE">
    <location>
        <begin position="1"/>
        <end position="216"/>
    </location>
</feature>
<feature type="region of interest" description="Phosphoribosyl-AMP cyclohydrolase">
    <location>
        <begin position="1"/>
        <end position="132"/>
    </location>
</feature>
<feature type="region of interest" description="Phosphoribosyl-ATP pyrophosphohydrolase">
    <location>
        <begin position="133"/>
        <end position="216"/>
    </location>
</feature>